<reference key="1">
    <citation type="journal article" date="2010" name="Genome Biol.">
        <title>Structure and dynamics of the pan-genome of Streptococcus pneumoniae and closely related species.</title>
        <authorList>
            <person name="Donati C."/>
            <person name="Hiller N.L."/>
            <person name="Tettelin H."/>
            <person name="Muzzi A."/>
            <person name="Croucher N.J."/>
            <person name="Angiuoli S.V."/>
            <person name="Oggioni M."/>
            <person name="Dunning Hotopp J.C."/>
            <person name="Hu F.Z."/>
            <person name="Riley D.R."/>
            <person name="Covacci A."/>
            <person name="Mitchell T.J."/>
            <person name="Bentley S.D."/>
            <person name="Kilian M."/>
            <person name="Ehrlich G.D."/>
            <person name="Rappuoli R."/>
            <person name="Moxon E.R."/>
            <person name="Masignani V."/>
        </authorList>
    </citation>
    <scope>NUCLEOTIDE SEQUENCE [LARGE SCALE GENOMIC DNA]</scope>
    <source>
        <strain>P1031</strain>
    </source>
</reference>
<protein>
    <recommendedName>
        <fullName evidence="1">Transcription elongation factor GreA</fullName>
    </recommendedName>
    <alternativeName>
        <fullName evidence="1">Transcript cleavage factor GreA</fullName>
    </alternativeName>
</protein>
<name>GREA_STRZP</name>
<gene>
    <name evidence="1" type="primary">greA</name>
    <name type="ordered locus">SPP_1537</name>
</gene>
<dbReference type="EMBL" id="CP000920">
    <property type="protein sequence ID" value="ACO20152.1"/>
    <property type="molecule type" value="Genomic_DNA"/>
</dbReference>
<dbReference type="RefSeq" id="WP_000818760.1">
    <property type="nucleotide sequence ID" value="NC_012467.1"/>
</dbReference>
<dbReference type="SMR" id="C1CLL5"/>
<dbReference type="GeneID" id="45653244"/>
<dbReference type="KEGG" id="spp:SPP_1537"/>
<dbReference type="HOGENOM" id="CLU_101379_2_1_9"/>
<dbReference type="GO" id="GO:0003677">
    <property type="term" value="F:DNA binding"/>
    <property type="evidence" value="ECO:0007669"/>
    <property type="project" value="UniProtKB-UniRule"/>
</dbReference>
<dbReference type="GO" id="GO:0070063">
    <property type="term" value="F:RNA polymerase binding"/>
    <property type="evidence" value="ECO:0007669"/>
    <property type="project" value="InterPro"/>
</dbReference>
<dbReference type="GO" id="GO:0006354">
    <property type="term" value="P:DNA-templated transcription elongation"/>
    <property type="evidence" value="ECO:0007669"/>
    <property type="project" value="TreeGrafter"/>
</dbReference>
<dbReference type="GO" id="GO:0032784">
    <property type="term" value="P:regulation of DNA-templated transcription elongation"/>
    <property type="evidence" value="ECO:0007669"/>
    <property type="project" value="UniProtKB-UniRule"/>
</dbReference>
<dbReference type="FunFam" id="1.10.287.180:FF:000001">
    <property type="entry name" value="Transcription elongation factor GreA"/>
    <property type="match status" value="1"/>
</dbReference>
<dbReference type="FunFam" id="3.10.50.30:FF:000001">
    <property type="entry name" value="Transcription elongation factor GreA"/>
    <property type="match status" value="1"/>
</dbReference>
<dbReference type="Gene3D" id="3.10.50.30">
    <property type="entry name" value="Transcription elongation factor, GreA/GreB, C-terminal domain"/>
    <property type="match status" value="1"/>
</dbReference>
<dbReference type="Gene3D" id="1.10.287.180">
    <property type="entry name" value="Transcription elongation factor, GreA/GreB, N-terminal domain"/>
    <property type="match status" value="1"/>
</dbReference>
<dbReference type="HAMAP" id="MF_00105">
    <property type="entry name" value="GreA_GreB"/>
    <property type="match status" value="1"/>
</dbReference>
<dbReference type="InterPro" id="IPR036953">
    <property type="entry name" value="GreA/GreB_C_sf"/>
</dbReference>
<dbReference type="InterPro" id="IPR018151">
    <property type="entry name" value="TF_GreA/GreB_CS"/>
</dbReference>
<dbReference type="InterPro" id="IPR006359">
    <property type="entry name" value="Tscrpt_elong_fac_GreA"/>
</dbReference>
<dbReference type="InterPro" id="IPR028624">
    <property type="entry name" value="Tscrpt_elong_fac_GreA/B"/>
</dbReference>
<dbReference type="InterPro" id="IPR001437">
    <property type="entry name" value="Tscrpt_elong_fac_GreA/B_C"/>
</dbReference>
<dbReference type="InterPro" id="IPR023459">
    <property type="entry name" value="Tscrpt_elong_fac_GreA/B_fam"/>
</dbReference>
<dbReference type="InterPro" id="IPR022691">
    <property type="entry name" value="Tscrpt_elong_fac_GreA/B_N"/>
</dbReference>
<dbReference type="InterPro" id="IPR036805">
    <property type="entry name" value="Tscrpt_elong_fac_GreA/B_N_sf"/>
</dbReference>
<dbReference type="NCBIfam" id="TIGR01462">
    <property type="entry name" value="greA"/>
    <property type="match status" value="1"/>
</dbReference>
<dbReference type="NCBIfam" id="NF001260">
    <property type="entry name" value="PRK00226.1-1"/>
    <property type="match status" value="1"/>
</dbReference>
<dbReference type="NCBIfam" id="NF001263">
    <property type="entry name" value="PRK00226.1-4"/>
    <property type="match status" value="1"/>
</dbReference>
<dbReference type="PANTHER" id="PTHR30437">
    <property type="entry name" value="TRANSCRIPTION ELONGATION FACTOR GREA"/>
    <property type="match status" value="1"/>
</dbReference>
<dbReference type="PANTHER" id="PTHR30437:SF4">
    <property type="entry name" value="TRANSCRIPTION ELONGATION FACTOR GREA"/>
    <property type="match status" value="1"/>
</dbReference>
<dbReference type="Pfam" id="PF01272">
    <property type="entry name" value="GreA_GreB"/>
    <property type="match status" value="1"/>
</dbReference>
<dbReference type="Pfam" id="PF03449">
    <property type="entry name" value="GreA_GreB_N"/>
    <property type="match status" value="1"/>
</dbReference>
<dbReference type="PIRSF" id="PIRSF006092">
    <property type="entry name" value="GreA_GreB"/>
    <property type="match status" value="1"/>
</dbReference>
<dbReference type="SUPFAM" id="SSF54534">
    <property type="entry name" value="FKBP-like"/>
    <property type="match status" value="1"/>
</dbReference>
<dbReference type="SUPFAM" id="SSF46557">
    <property type="entry name" value="GreA transcript cleavage protein, N-terminal domain"/>
    <property type="match status" value="1"/>
</dbReference>
<dbReference type="PROSITE" id="PS00829">
    <property type="entry name" value="GREAB_1"/>
    <property type="match status" value="1"/>
</dbReference>
<dbReference type="PROSITE" id="PS00830">
    <property type="entry name" value="GREAB_2"/>
    <property type="match status" value="1"/>
</dbReference>
<sequence>MAEKTYPMTLEEKEKLEKELEELKLVRRPEVVERIKIARSYGDLSENSEYEAAKDEQAFVEGQISSLETKIRYAEIVNSDAVAQDEVAIGKTVTIQEIGEDEEEVYIIVGSAGADAFAGKVSNESPIGQALIGKKTGDTATIETPVGSYDVKILKVEKTA</sequence>
<evidence type="ECO:0000255" key="1">
    <source>
        <dbReference type="HAMAP-Rule" id="MF_00105"/>
    </source>
</evidence>
<feature type="chain" id="PRO_1000118973" description="Transcription elongation factor GreA">
    <location>
        <begin position="1"/>
        <end position="160"/>
    </location>
</feature>
<feature type="coiled-coil region" evidence="1">
    <location>
        <begin position="1"/>
        <end position="72"/>
    </location>
</feature>
<accession>C1CLL5</accession>
<proteinExistence type="inferred from homology"/>
<comment type="function">
    <text evidence="1">Necessary for efficient RNA polymerase transcription elongation past template-encoded arresting sites. The arresting sites in DNA have the property of trapping a certain fraction of elongating RNA polymerases that pass through, resulting in locked ternary complexes. Cleavage of the nascent transcript by cleavage factors such as GreA or GreB allows the resumption of elongation from the new 3'terminus. GreA releases sequences of 2 to 3 nucleotides.</text>
</comment>
<comment type="similarity">
    <text evidence="1">Belongs to the GreA/GreB family.</text>
</comment>
<organism>
    <name type="scientific">Streptococcus pneumoniae (strain P1031)</name>
    <dbReference type="NCBI Taxonomy" id="488223"/>
    <lineage>
        <taxon>Bacteria</taxon>
        <taxon>Bacillati</taxon>
        <taxon>Bacillota</taxon>
        <taxon>Bacilli</taxon>
        <taxon>Lactobacillales</taxon>
        <taxon>Streptococcaceae</taxon>
        <taxon>Streptococcus</taxon>
    </lineage>
</organism>
<keyword id="KW-0175">Coiled coil</keyword>
<keyword id="KW-0238">DNA-binding</keyword>
<keyword id="KW-0804">Transcription</keyword>
<keyword id="KW-0805">Transcription regulation</keyword>